<organism>
    <name type="scientific">Guizotia abyssinica</name>
    <name type="common">Niger</name>
    <name type="synonym">Ramtilla</name>
    <dbReference type="NCBI Taxonomy" id="4230"/>
    <lineage>
        <taxon>Eukaryota</taxon>
        <taxon>Viridiplantae</taxon>
        <taxon>Streptophyta</taxon>
        <taxon>Embryophyta</taxon>
        <taxon>Tracheophyta</taxon>
        <taxon>Spermatophyta</taxon>
        <taxon>Magnoliopsida</taxon>
        <taxon>eudicotyledons</taxon>
        <taxon>Gunneridae</taxon>
        <taxon>Pentapetalae</taxon>
        <taxon>asterids</taxon>
        <taxon>campanulids</taxon>
        <taxon>Asterales</taxon>
        <taxon>Asteraceae</taxon>
        <taxon>Asteroideae</taxon>
        <taxon>Heliantheae alliance</taxon>
        <taxon>Millerieae</taxon>
        <taxon>Guizotia</taxon>
    </lineage>
</organism>
<dbReference type="EMBL" id="EU549769">
    <property type="protein sequence ID" value="ACB86572.1"/>
    <property type="molecule type" value="Genomic_DNA"/>
</dbReference>
<dbReference type="EMBL" id="EU549769">
    <property type="protein sequence ID" value="ACB86585.1"/>
    <property type="molecule type" value="Genomic_DNA"/>
</dbReference>
<dbReference type="SMR" id="B2LMN9"/>
<dbReference type="GO" id="GO:0009507">
    <property type="term" value="C:chloroplast"/>
    <property type="evidence" value="ECO:0007669"/>
    <property type="project" value="UniProtKB-SubCell"/>
</dbReference>
<dbReference type="GO" id="GO:0015935">
    <property type="term" value="C:small ribosomal subunit"/>
    <property type="evidence" value="ECO:0007669"/>
    <property type="project" value="InterPro"/>
</dbReference>
<dbReference type="GO" id="GO:0019843">
    <property type="term" value="F:rRNA binding"/>
    <property type="evidence" value="ECO:0007669"/>
    <property type="project" value="UniProtKB-UniRule"/>
</dbReference>
<dbReference type="GO" id="GO:0003735">
    <property type="term" value="F:structural constituent of ribosome"/>
    <property type="evidence" value="ECO:0007669"/>
    <property type="project" value="InterPro"/>
</dbReference>
<dbReference type="GO" id="GO:0006412">
    <property type="term" value="P:translation"/>
    <property type="evidence" value="ECO:0007669"/>
    <property type="project" value="UniProtKB-UniRule"/>
</dbReference>
<dbReference type="CDD" id="cd14871">
    <property type="entry name" value="uS7_Chloroplast"/>
    <property type="match status" value="1"/>
</dbReference>
<dbReference type="FunFam" id="1.10.455.10:FF:000001">
    <property type="entry name" value="30S ribosomal protein S7"/>
    <property type="match status" value="1"/>
</dbReference>
<dbReference type="Gene3D" id="1.10.455.10">
    <property type="entry name" value="Ribosomal protein S7 domain"/>
    <property type="match status" value="1"/>
</dbReference>
<dbReference type="HAMAP" id="MF_00480_B">
    <property type="entry name" value="Ribosomal_uS7_B"/>
    <property type="match status" value="1"/>
</dbReference>
<dbReference type="InterPro" id="IPR000235">
    <property type="entry name" value="Ribosomal_uS7"/>
</dbReference>
<dbReference type="InterPro" id="IPR005717">
    <property type="entry name" value="Ribosomal_uS7_bac/org-type"/>
</dbReference>
<dbReference type="InterPro" id="IPR020606">
    <property type="entry name" value="Ribosomal_uS7_CS"/>
</dbReference>
<dbReference type="InterPro" id="IPR023798">
    <property type="entry name" value="Ribosomal_uS7_dom"/>
</dbReference>
<dbReference type="InterPro" id="IPR036823">
    <property type="entry name" value="Ribosomal_uS7_dom_sf"/>
</dbReference>
<dbReference type="NCBIfam" id="TIGR01029">
    <property type="entry name" value="rpsG_bact"/>
    <property type="match status" value="1"/>
</dbReference>
<dbReference type="PANTHER" id="PTHR11205">
    <property type="entry name" value="RIBOSOMAL PROTEIN S7"/>
    <property type="match status" value="1"/>
</dbReference>
<dbReference type="Pfam" id="PF00177">
    <property type="entry name" value="Ribosomal_S7"/>
    <property type="match status" value="1"/>
</dbReference>
<dbReference type="PIRSF" id="PIRSF002122">
    <property type="entry name" value="RPS7p_RPS7a_RPS5e_RPS7o"/>
    <property type="match status" value="1"/>
</dbReference>
<dbReference type="SUPFAM" id="SSF47973">
    <property type="entry name" value="Ribosomal protein S7"/>
    <property type="match status" value="1"/>
</dbReference>
<dbReference type="PROSITE" id="PS00052">
    <property type="entry name" value="RIBOSOMAL_S7"/>
    <property type="match status" value="1"/>
</dbReference>
<feature type="chain" id="PRO_0000344340" description="Small ribosomal subunit protein uS7cz/uS7cy">
    <location>
        <begin position="1"/>
        <end position="155"/>
    </location>
</feature>
<comment type="function">
    <text evidence="1">One of the primary rRNA binding proteins, it binds directly to 16S rRNA where it nucleates assembly of the head domain of the 30S subunit.</text>
</comment>
<comment type="subunit">
    <text evidence="1">Part of the 30S ribosomal subunit.</text>
</comment>
<comment type="subcellular location">
    <subcellularLocation>
        <location>Plastid</location>
        <location>Chloroplast</location>
    </subcellularLocation>
</comment>
<comment type="similarity">
    <text evidence="3">Belongs to the universal ribosomal protein uS7 family.</text>
</comment>
<proteinExistence type="inferred from homology"/>
<sequence length="155" mass="17308">MSRRGTAEEKTAKSDPIYRNRLVNMLVNRILKHGKKSLAYQIIYRAVKKIQQKTETNPLSVLRQAIHGVTPGIAVKARRVGGSTHQVPIEIGSTQGKALAIRWLLAASRKRPGRNMAFKLSSELVDAAKGSGDAIRKREETHRMAEANRAFAHFR</sequence>
<name>RR7_GUIAB</name>
<gene>
    <name type="primary">rps7-A</name>
    <name type="ordered locus">GuabCp068</name>
</gene>
<gene>
    <name type="primary">rps7-B</name>
    <name type="ordered locus">GuabCp082</name>
</gene>
<accession>B2LMN9</accession>
<reference key="1">
    <citation type="submission" date="2008-03" db="EMBL/GenBank/DDBJ databases">
        <title>Guizotia abyssinica chloroplast sequenced using Solexa.</title>
        <authorList>
            <person name="Kane N.C."/>
            <person name="Dempewolf H."/>
            <person name="Stewart M.L."/>
            <person name="Cronk Q."/>
            <person name="Rieseberrg L.H."/>
        </authorList>
    </citation>
    <scope>NUCLEOTIDE SEQUENCE [LARGE SCALE GENOMIC DNA]</scope>
    <source>
        <strain>cv. PI 508077</strain>
    </source>
</reference>
<keyword id="KW-0150">Chloroplast</keyword>
<keyword id="KW-0934">Plastid</keyword>
<keyword id="KW-0687">Ribonucleoprotein</keyword>
<keyword id="KW-0689">Ribosomal protein</keyword>
<keyword id="KW-0694">RNA-binding</keyword>
<keyword id="KW-0699">rRNA-binding</keyword>
<evidence type="ECO:0000250" key="1"/>
<evidence type="ECO:0000255" key="2">
    <source>
        <dbReference type="HAMAP-Rule" id="MF_00480"/>
    </source>
</evidence>
<evidence type="ECO:0000305" key="3"/>
<geneLocation type="chloroplast"/>
<protein>
    <recommendedName>
        <fullName evidence="2">Small ribosomal subunit protein uS7cz/uS7cy</fullName>
    </recommendedName>
    <alternativeName>
        <fullName>30S ribosomal protein S7, chloroplastic</fullName>
    </alternativeName>
</protein>